<keyword id="KW-0963">Cytoplasm</keyword>
<keyword id="KW-0255">Endonuclease</keyword>
<keyword id="KW-0378">Hydrolase</keyword>
<keyword id="KW-0540">Nuclease</keyword>
<keyword id="KW-0819">tRNA processing</keyword>
<reference key="1">
    <citation type="journal article" date="2000" name="Proc. Natl. Acad. Sci. U.S.A.">
        <title>Archaeal adaptation to higher temperatures revealed by genomic sequence of Thermoplasma volcanium.</title>
        <authorList>
            <person name="Kawashima T."/>
            <person name="Amano N."/>
            <person name="Koike H."/>
            <person name="Makino S."/>
            <person name="Higuchi S."/>
            <person name="Kawashima-Ohya Y."/>
            <person name="Watanabe K."/>
            <person name="Yamazaki M."/>
            <person name="Kanehori K."/>
            <person name="Kawamoto T."/>
            <person name="Nunoshiba T."/>
            <person name="Yamamoto Y."/>
            <person name="Aramaki H."/>
            <person name="Makino K."/>
            <person name="Suzuki M."/>
        </authorList>
    </citation>
    <scope>NUCLEOTIDE SEQUENCE [LARGE SCALE GENOMIC DNA]</scope>
    <source>
        <strain>ATCC 51530 / DSM 4299 / JCM 9571 / NBRC 15438 / GSS1</strain>
    </source>
</reference>
<gene>
    <name evidence="1" type="primary">rnp1</name>
    <name type="ordered locus">TV0337</name>
    <name type="ORF">TVG0337218</name>
</gene>
<dbReference type="EC" id="3.1.26.5" evidence="1"/>
<dbReference type="EMBL" id="BA000011">
    <property type="protein sequence ID" value="BAB59479.1"/>
    <property type="molecule type" value="Genomic_DNA"/>
</dbReference>
<dbReference type="RefSeq" id="WP_010916591.1">
    <property type="nucleotide sequence ID" value="NC_002689.2"/>
</dbReference>
<dbReference type="SMR" id="Q97BW8"/>
<dbReference type="STRING" id="273116.gene:9381114"/>
<dbReference type="PaxDb" id="273116-14324552"/>
<dbReference type="GeneID" id="1440849"/>
<dbReference type="KEGG" id="tvo:TVG0337218"/>
<dbReference type="eggNOG" id="arCOG00784">
    <property type="taxonomic scope" value="Archaea"/>
</dbReference>
<dbReference type="HOGENOM" id="CLU_107020_2_1_2"/>
<dbReference type="OrthoDB" id="39019at2157"/>
<dbReference type="PhylomeDB" id="Q97BW8"/>
<dbReference type="Proteomes" id="UP000001017">
    <property type="component" value="Chromosome"/>
</dbReference>
<dbReference type="GO" id="GO:0005737">
    <property type="term" value="C:cytoplasm"/>
    <property type="evidence" value="ECO:0007669"/>
    <property type="project" value="UniProtKB-SubCell"/>
</dbReference>
<dbReference type="GO" id="GO:0030677">
    <property type="term" value="C:ribonuclease P complex"/>
    <property type="evidence" value="ECO:0007669"/>
    <property type="project" value="UniProtKB-UniRule"/>
</dbReference>
<dbReference type="GO" id="GO:0004526">
    <property type="term" value="F:ribonuclease P activity"/>
    <property type="evidence" value="ECO:0007669"/>
    <property type="project" value="UniProtKB-UniRule"/>
</dbReference>
<dbReference type="GO" id="GO:0003723">
    <property type="term" value="F:RNA binding"/>
    <property type="evidence" value="ECO:0007669"/>
    <property type="project" value="InterPro"/>
</dbReference>
<dbReference type="GO" id="GO:0001682">
    <property type="term" value="P:tRNA 5'-leader removal"/>
    <property type="evidence" value="ECO:0007669"/>
    <property type="project" value="UniProtKB-UniRule"/>
</dbReference>
<dbReference type="Gene3D" id="2.30.30.210">
    <property type="entry name" value="Ribonuclease P/MRP, subunit p29"/>
    <property type="match status" value="1"/>
</dbReference>
<dbReference type="HAMAP" id="MF_00754">
    <property type="entry name" value="RNase_P_1"/>
    <property type="match status" value="1"/>
</dbReference>
<dbReference type="InterPro" id="IPR036980">
    <property type="entry name" value="RNase_P/MRP_Rpp29_sf"/>
</dbReference>
<dbReference type="InterPro" id="IPR023538">
    <property type="entry name" value="RNP1"/>
</dbReference>
<dbReference type="InterPro" id="IPR023534">
    <property type="entry name" value="Rof/RNase_P-like"/>
</dbReference>
<dbReference type="InterPro" id="IPR002730">
    <property type="entry name" value="Rpp29/RNP1"/>
</dbReference>
<dbReference type="NCBIfam" id="NF046110">
    <property type="entry name" value="RNaseP1Mthb"/>
    <property type="match status" value="1"/>
</dbReference>
<dbReference type="Pfam" id="PF01868">
    <property type="entry name" value="RNase_P-MRP_p29"/>
    <property type="match status" value="1"/>
</dbReference>
<dbReference type="SMART" id="SM00538">
    <property type="entry name" value="POP4"/>
    <property type="match status" value="1"/>
</dbReference>
<dbReference type="SUPFAM" id="SSF101744">
    <property type="entry name" value="Rof/RNase P subunit-like"/>
    <property type="match status" value="1"/>
</dbReference>
<sequence length="89" mass="10217">MIYISEFIGRHVEVIQSSNRYDVGISGQVSFETKNTFEITKGTGKVIVPKEGRIFTFDGKFKVDGSLINYRPEDRLREYRKILKKLGGN</sequence>
<name>RNP1_THEVO</name>
<comment type="function">
    <text evidence="1">Part of ribonuclease P, a protein complex that generates mature tRNA molecules by cleaving their 5'-ends.</text>
</comment>
<comment type="catalytic activity">
    <reaction evidence="1">
        <text>Endonucleolytic cleavage of RNA, removing 5'-extranucleotides from tRNA precursor.</text>
        <dbReference type="EC" id="3.1.26.5"/>
    </reaction>
</comment>
<comment type="subunit">
    <text evidence="1">Consists of a catalytic RNA component and at least 4-5 protein subunits.</text>
</comment>
<comment type="subcellular location">
    <subcellularLocation>
        <location evidence="1">Cytoplasm</location>
    </subcellularLocation>
</comment>
<comment type="similarity">
    <text evidence="1">Belongs to the eukaryotic/archaeal RNase P protein component 1 family.</text>
</comment>
<evidence type="ECO:0000255" key="1">
    <source>
        <dbReference type="HAMAP-Rule" id="MF_00754"/>
    </source>
</evidence>
<organism>
    <name type="scientific">Thermoplasma volcanium (strain ATCC 51530 / DSM 4299 / JCM 9571 / NBRC 15438 / GSS1)</name>
    <dbReference type="NCBI Taxonomy" id="273116"/>
    <lineage>
        <taxon>Archaea</taxon>
        <taxon>Methanobacteriati</taxon>
        <taxon>Thermoplasmatota</taxon>
        <taxon>Thermoplasmata</taxon>
        <taxon>Thermoplasmatales</taxon>
        <taxon>Thermoplasmataceae</taxon>
        <taxon>Thermoplasma</taxon>
    </lineage>
</organism>
<protein>
    <recommendedName>
        <fullName evidence="1">Ribonuclease P protein component 1</fullName>
        <shortName evidence="1">RNase P component 1</shortName>
        <ecNumber evidence="1">3.1.26.5</ecNumber>
    </recommendedName>
    <alternativeName>
        <fullName evidence="1">Rpp29</fullName>
    </alternativeName>
</protein>
<proteinExistence type="inferred from homology"/>
<accession>Q97BW8</accession>
<feature type="chain" id="PRO_0000128442" description="Ribonuclease P protein component 1">
    <location>
        <begin position="1"/>
        <end position="89"/>
    </location>
</feature>